<reference key="1">
    <citation type="journal article" date="1994" name="Biochemistry">
        <title>Human, mouse, and rat calnexin cDNA cloning: identification of potential calcium binding motifs and gene localization to human chromosome 5.</title>
        <authorList>
            <person name="Tjoelker L.W."/>
            <person name="Seyfried C.E."/>
            <person name="Eddy R.L. Jr."/>
            <person name="Shows T.B. Jr."/>
            <person name="Calderon J."/>
            <person name="Schreiber R.B."/>
            <person name="Gray P.W."/>
        </authorList>
    </citation>
    <scope>NUCLEOTIDE SEQUENCE [MRNA]</scope>
    <source>
        <tissue>T-cell</tissue>
    </source>
</reference>
<reference key="2">
    <citation type="submission" date="2007-07" db="UniProtKB">
        <authorList>
            <person name="Lubec G."/>
            <person name="Kang S.U."/>
        </authorList>
    </citation>
    <scope>PROTEIN SEQUENCE OF 49-58</scope>
    <scope>IDENTIFICATION BY MASS SPECTROMETRY</scope>
    <source>
        <strain>Sprague-Dawley</strain>
        <tissue>Brain</tissue>
    </source>
</reference>
<reference key="3">
    <citation type="journal article" date="1993" name="J. Biol. Chem.">
        <title>Identification and purification of a calcium-binding protein in hepatic nuclear membranes.</title>
        <authorList>
            <person name="Gilchrist J.S."/>
            <person name="Pierce G.N."/>
        </authorList>
    </citation>
    <scope>CHARACTERIZATION</scope>
</reference>
<reference key="4">
    <citation type="journal article" date="1999" name="EMBO J.">
        <title>Phosphorylation by CK2 and MAPK enhances calnexin association with ribosomes.</title>
        <authorList>
            <person name="Chevet E."/>
            <person name="Wong H.N."/>
            <person name="Gerber D."/>
            <person name="Cochet C."/>
            <person name="Fazel A."/>
            <person name="Cameron P.H."/>
            <person name="Gushue J.N."/>
            <person name="Thomas D.Y."/>
            <person name="Bergeron J.J."/>
        </authorList>
    </citation>
    <scope>PHOSPHORYLATION AT SER-563</scope>
    <scope>INTERACTION WITH MAPK3/ERK1</scope>
    <scope>ASSOCIATION WITH RIBOSOMES</scope>
</reference>
<reference key="5">
    <citation type="journal article" date="2012" name="Nat. Commun.">
        <title>Quantitative maps of protein phosphorylation sites across 14 different rat organs and tissues.</title>
        <authorList>
            <person name="Lundby A."/>
            <person name="Secher A."/>
            <person name="Lage K."/>
            <person name="Nordsborg N.B."/>
            <person name="Dmytriyev A."/>
            <person name="Lundby C."/>
            <person name="Olsen J.V."/>
        </authorList>
    </citation>
    <scope>PHOSPHORYLATION [LARGE SCALE ANALYSIS] AT SER-553; SER-563 AND SER-582</scope>
    <scope>IDENTIFICATION BY MASS SPECTROMETRY [LARGE SCALE ANALYSIS]</scope>
</reference>
<name>CALX_RAT</name>
<keyword id="KW-0007">Acetylation</keyword>
<keyword id="KW-0106">Calcium</keyword>
<keyword id="KW-0143">Chaperone</keyword>
<keyword id="KW-0903">Direct protein sequencing</keyword>
<keyword id="KW-1015">Disulfide bond</keyword>
<keyword id="KW-0256">Endoplasmic reticulum</keyword>
<keyword id="KW-0430">Lectin</keyword>
<keyword id="KW-0449">Lipoprotein</keyword>
<keyword id="KW-0472">Membrane</keyword>
<keyword id="KW-0479">Metal-binding</keyword>
<keyword id="KW-0496">Mitochondrion</keyword>
<keyword id="KW-0564">Palmitate</keyword>
<keyword id="KW-0597">Phosphoprotein</keyword>
<keyword id="KW-1185">Reference proteome</keyword>
<keyword id="KW-0677">Repeat</keyword>
<keyword id="KW-0732">Signal</keyword>
<keyword id="KW-0812">Transmembrane</keyword>
<keyword id="KW-1133">Transmembrane helix</keyword>
<keyword id="KW-0832">Ubl conjugation</keyword>
<evidence type="ECO:0000250" key="1"/>
<evidence type="ECO:0000250" key="2">
    <source>
        <dbReference type="UniProtKB" id="P14211"/>
    </source>
</evidence>
<evidence type="ECO:0000250" key="3">
    <source>
        <dbReference type="UniProtKB" id="P24643"/>
    </source>
</evidence>
<evidence type="ECO:0000250" key="4">
    <source>
        <dbReference type="UniProtKB" id="P27824"/>
    </source>
</evidence>
<evidence type="ECO:0000250" key="5">
    <source>
        <dbReference type="UniProtKB" id="P35564"/>
    </source>
</evidence>
<evidence type="ECO:0000255" key="6"/>
<evidence type="ECO:0000256" key="7">
    <source>
        <dbReference type="SAM" id="MobiDB-lite"/>
    </source>
</evidence>
<evidence type="ECO:0000269" key="8">
    <source>
    </source>
</evidence>
<evidence type="ECO:0000305" key="9"/>
<evidence type="ECO:0007744" key="10">
    <source>
    </source>
</evidence>
<dbReference type="EMBL" id="L18889">
    <property type="protein sequence ID" value="AAA21015.1"/>
    <property type="molecule type" value="mRNA"/>
</dbReference>
<dbReference type="PIR" id="C54354">
    <property type="entry name" value="C54354"/>
</dbReference>
<dbReference type="RefSeq" id="NP_742005.1">
    <property type="nucleotide sequence ID" value="NM_172008.2"/>
</dbReference>
<dbReference type="RefSeq" id="XP_008765901.1">
    <property type="nucleotide sequence ID" value="XM_008767679.4"/>
</dbReference>
<dbReference type="RefSeq" id="XP_008765902.1">
    <property type="nucleotide sequence ID" value="XM_008767680.4"/>
</dbReference>
<dbReference type="SMR" id="P35565"/>
<dbReference type="BioGRID" id="247827">
    <property type="interactions" value="7"/>
</dbReference>
<dbReference type="FunCoup" id="P35565">
    <property type="interactions" value="2765"/>
</dbReference>
<dbReference type="IntAct" id="P35565">
    <property type="interactions" value="12"/>
</dbReference>
<dbReference type="MINT" id="P35565"/>
<dbReference type="STRING" id="10116.ENSRNOP00000040859"/>
<dbReference type="iPTMnet" id="P35565"/>
<dbReference type="PhosphoSitePlus" id="P35565"/>
<dbReference type="SwissPalm" id="P35565"/>
<dbReference type="jPOST" id="P35565"/>
<dbReference type="PaxDb" id="10116-ENSRNOP00000040859"/>
<dbReference type="GeneID" id="29144"/>
<dbReference type="KEGG" id="rno:29144"/>
<dbReference type="UCSC" id="RGD:2266">
    <property type="organism name" value="rat"/>
</dbReference>
<dbReference type="AGR" id="RGD:2266"/>
<dbReference type="CTD" id="821"/>
<dbReference type="RGD" id="2266">
    <property type="gene designation" value="Canx"/>
</dbReference>
<dbReference type="VEuPathDB" id="HostDB:ENSRNOG00000003343"/>
<dbReference type="eggNOG" id="KOG0675">
    <property type="taxonomic scope" value="Eukaryota"/>
</dbReference>
<dbReference type="HOGENOM" id="CLU_018224_2_0_1"/>
<dbReference type="InParanoid" id="P35565"/>
<dbReference type="OrthoDB" id="44081at9989"/>
<dbReference type="PhylomeDB" id="P35565"/>
<dbReference type="Reactome" id="R-RNO-2132295">
    <property type="pathway name" value="MHC class II antigen presentation"/>
</dbReference>
<dbReference type="Reactome" id="R-RNO-8984722">
    <property type="pathway name" value="Interleukin-35 Signalling"/>
</dbReference>
<dbReference type="Reactome" id="R-RNO-901042">
    <property type="pathway name" value="Calnexin/calreticulin cycle"/>
</dbReference>
<dbReference type="Reactome" id="R-RNO-9020956">
    <property type="pathway name" value="Interleukin-27 signaling"/>
</dbReference>
<dbReference type="Reactome" id="R-RNO-983170">
    <property type="pathway name" value="Antigen Presentation: Folding, assembly and peptide loading of class I MHC"/>
</dbReference>
<dbReference type="PRO" id="PR:P35565"/>
<dbReference type="Proteomes" id="UP000002494">
    <property type="component" value="Chromosome 10"/>
</dbReference>
<dbReference type="Bgee" id="ENSRNOG00000003343">
    <property type="expression patterns" value="Expressed in lung and 19 other cell types or tissues"/>
</dbReference>
<dbReference type="GO" id="GO:0030424">
    <property type="term" value="C:axon"/>
    <property type="evidence" value="ECO:0000314"/>
    <property type="project" value="RGD"/>
</dbReference>
<dbReference type="GO" id="GO:0032839">
    <property type="term" value="C:dendrite cytoplasm"/>
    <property type="evidence" value="ECO:0000314"/>
    <property type="project" value="RGD"/>
</dbReference>
<dbReference type="GO" id="GO:0043197">
    <property type="term" value="C:dendritic spine"/>
    <property type="evidence" value="ECO:0000314"/>
    <property type="project" value="RGD"/>
</dbReference>
<dbReference type="GO" id="GO:0005783">
    <property type="term" value="C:endoplasmic reticulum"/>
    <property type="evidence" value="ECO:0000314"/>
    <property type="project" value="UniProtKB"/>
</dbReference>
<dbReference type="GO" id="GO:0005789">
    <property type="term" value="C:endoplasmic reticulum membrane"/>
    <property type="evidence" value="ECO:0000250"/>
    <property type="project" value="AgBase"/>
</dbReference>
<dbReference type="GO" id="GO:0044322">
    <property type="term" value="C:endoplasmic reticulum quality control compartment"/>
    <property type="evidence" value="ECO:0000266"/>
    <property type="project" value="RGD"/>
</dbReference>
<dbReference type="GO" id="GO:0098978">
    <property type="term" value="C:glutamatergic synapse"/>
    <property type="evidence" value="ECO:0000314"/>
    <property type="project" value="SynGO"/>
</dbReference>
<dbReference type="GO" id="GO:0033162">
    <property type="term" value="C:melanosome membrane"/>
    <property type="evidence" value="ECO:0007669"/>
    <property type="project" value="UniProtKB-SubCell"/>
</dbReference>
<dbReference type="GO" id="GO:0016020">
    <property type="term" value="C:membrane"/>
    <property type="evidence" value="ECO:0000266"/>
    <property type="project" value="RGD"/>
</dbReference>
<dbReference type="GO" id="GO:0044233">
    <property type="term" value="C:mitochondria-associated endoplasmic reticulum membrane contact site"/>
    <property type="evidence" value="ECO:0000266"/>
    <property type="project" value="RGD"/>
</dbReference>
<dbReference type="GO" id="GO:0031966">
    <property type="term" value="C:mitochondrial membrane"/>
    <property type="evidence" value="ECO:0007669"/>
    <property type="project" value="UniProtKB-SubCell"/>
</dbReference>
<dbReference type="GO" id="GO:0043025">
    <property type="term" value="C:neuronal cell body"/>
    <property type="evidence" value="ECO:0000314"/>
    <property type="project" value="RGD"/>
</dbReference>
<dbReference type="GO" id="GO:0031965">
    <property type="term" value="C:nuclear membrane"/>
    <property type="evidence" value="ECO:0000266"/>
    <property type="project" value="RGD"/>
</dbReference>
<dbReference type="GO" id="GO:0045211">
    <property type="term" value="C:postsynaptic membrane"/>
    <property type="evidence" value="ECO:0000314"/>
    <property type="project" value="SynGO"/>
</dbReference>
<dbReference type="GO" id="GO:0048787">
    <property type="term" value="C:presynaptic active zone membrane"/>
    <property type="evidence" value="ECO:0000314"/>
    <property type="project" value="SynGO"/>
</dbReference>
<dbReference type="GO" id="GO:0032991">
    <property type="term" value="C:protein-containing complex"/>
    <property type="evidence" value="ECO:0000314"/>
    <property type="project" value="RGD"/>
</dbReference>
<dbReference type="GO" id="GO:0005840">
    <property type="term" value="C:ribosome"/>
    <property type="evidence" value="ECO:0000314"/>
    <property type="project" value="RGD"/>
</dbReference>
<dbReference type="GO" id="GO:0005790">
    <property type="term" value="C:smooth endoplasmic reticulum"/>
    <property type="evidence" value="ECO:0000314"/>
    <property type="project" value="UniProtKB"/>
</dbReference>
<dbReference type="GO" id="GO:0034185">
    <property type="term" value="F:apolipoprotein binding"/>
    <property type="evidence" value="ECO:0000314"/>
    <property type="project" value="RGD"/>
</dbReference>
<dbReference type="GO" id="GO:0005509">
    <property type="term" value="F:calcium ion binding"/>
    <property type="evidence" value="ECO:0000318"/>
    <property type="project" value="GO_Central"/>
</dbReference>
<dbReference type="GO" id="GO:0030246">
    <property type="term" value="F:carbohydrate binding"/>
    <property type="evidence" value="ECO:0007669"/>
    <property type="project" value="UniProtKB-KW"/>
</dbReference>
<dbReference type="GO" id="GO:0035255">
    <property type="term" value="F:ionotropic glutamate receptor binding"/>
    <property type="evidence" value="ECO:0000314"/>
    <property type="project" value="RGD"/>
</dbReference>
<dbReference type="GO" id="GO:0051082">
    <property type="term" value="F:unfolded protein binding"/>
    <property type="evidence" value="ECO:0007669"/>
    <property type="project" value="InterPro"/>
</dbReference>
<dbReference type="GO" id="GO:0072583">
    <property type="term" value="P:clathrin-dependent endocytosis"/>
    <property type="evidence" value="ECO:0000250"/>
    <property type="project" value="UniProtKB"/>
</dbReference>
<dbReference type="GO" id="GO:0036503">
    <property type="term" value="P:ERAD pathway"/>
    <property type="evidence" value="ECO:0000318"/>
    <property type="project" value="GO_Central"/>
</dbReference>
<dbReference type="GO" id="GO:0006457">
    <property type="term" value="P:protein folding"/>
    <property type="evidence" value="ECO:0000318"/>
    <property type="project" value="GO_Central"/>
</dbReference>
<dbReference type="GO" id="GO:0048488">
    <property type="term" value="P:synaptic vesicle endocytosis"/>
    <property type="evidence" value="ECO:0000250"/>
    <property type="project" value="UniProtKB"/>
</dbReference>
<dbReference type="FunFam" id="2.10.250.10:FF:000001">
    <property type="entry name" value="Calnexin homolog"/>
    <property type="match status" value="1"/>
</dbReference>
<dbReference type="FunFam" id="2.60.120.200:FF:000430">
    <property type="entry name" value="Si:ch211-274f20.2"/>
    <property type="match status" value="1"/>
</dbReference>
<dbReference type="Gene3D" id="2.60.120.200">
    <property type="match status" value="1"/>
</dbReference>
<dbReference type="Gene3D" id="2.10.250.10">
    <property type="entry name" value="Calreticulin/calnexin, P domain"/>
    <property type="match status" value="1"/>
</dbReference>
<dbReference type="InterPro" id="IPR001580">
    <property type="entry name" value="Calret/calnex"/>
</dbReference>
<dbReference type="InterPro" id="IPR018124">
    <property type="entry name" value="Calret/calnex_CS"/>
</dbReference>
<dbReference type="InterPro" id="IPR009033">
    <property type="entry name" value="Calreticulin/calnexin_P_dom_sf"/>
</dbReference>
<dbReference type="InterPro" id="IPR013320">
    <property type="entry name" value="ConA-like_dom_sf"/>
</dbReference>
<dbReference type="PANTHER" id="PTHR11073:SF11">
    <property type="entry name" value="CALNEXIN"/>
    <property type="match status" value="1"/>
</dbReference>
<dbReference type="PANTHER" id="PTHR11073">
    <property type="entry name" value="CALRETICULIN AND CALNEXIN"/>
    <property type="match status" value="1"/>
</dbReference>
<dbReference type="Pfam" id="PF00262">
    <property type="entry name" value="Calreticulin"/>
    <property type="match status" value="1"/>
</dbReference>
<dbReference type="PRINTS" id="PR00626">
    <property type="entry name" value="CALRETICULIN"/>
</dbReference>
<dbReference type="SUPFAM" id="SSF49899">
    <property type="entry name" value="Concanavalin A-like lectins/glucanases"/>
    <property type="match status" value="2"/>
</dbReference>
<dbReference type="SUPFAM" id="SSF63887">
    <property type="entry name" value="P-domain of calnexin/calreticulin"/>
    <property type="match status" value="1"/>
</dbReference>
<dbReference type="PROSITE" id="PS00803">
    <property type="entry name" value="CALRETICULIN_1"/>
    <property type="match status" value="1"/>
</dbReference>
<dbReference type="PROSITE" id="PS00804">
    <property type="entry name" value="CALRETICULIN_2"/>
    <property type="match status" value="1"/>
</dbReference>
<dbReference type="PROSITE" id="PS00805">
    <property type="entry name" value="CALRETICULIN_REPEAT"/>
    <property type="match status" value="3"/>
</dbReference>
<comment type="function">
    <text>Calcium-binding protein that interacts with newly synthesized monoglucosylated glycoproteins in the endoplasmic reticulum. It may act in assisting protein assembly and/or in the retention within the ER of unassembled protein subunits. It seems to play a major role in the quality control apparatus of the ER by the retention of incorrectly folded proteins. Associated with partial T-cell antigen receptor complexes that escape the ER of immature thymocytes, it may function as a signaling complex regulating thymocyte maturation. Additionally it may play a role in receptor-mediated endocytosis at the synapse.</text>
</comment>
<comment type="subunit">
    <text evidence="4 5 8">Interacts with MAPK3/ERK1 (PubMed:10393181). Interacts with KCNH2 (By similarity). Associates with ribosomes (PubMed:10393181). Interacts with SGIP1; involved in negative regulation of endocytosis (By similarity). The palmitoylated form interacts with the ribosome-translocon complex component SSR1, promoting efficient folding of glycoproteins (By similarity). Interacts with SERPINA2P/SERPINA2 and with the S and Z variants of SERPINA1 (By similarity). Interacts with PPIB (By similarity). Interacts with ZNRF4 (By similarity). Interacts with SMIM22 (By similarity). Interacts with TMX2 (By similarity). Interacts with TMEM35A/NACHO and CHRNA7 (By similarity). Interacts with reticulophagy regulators RETREG2 and RETREG3 (By similarity). Interacts with DNM1L; may form part of a larger protein complex at the ER-mitochondrial interface during mitochondrial fission (By similarity). Interacts with ADAM7 (By similarity).</text>
</comment>
<comment type="subcellular location">
    <subcellularLocation>
        <location evidence="3">Endoplasmic reticulum membrane</location>
        <topology evidence="6">Single-pass type I membrane protein</topology>
    </subcellularLocation>
    <subcellularLocation>
        <location evidence="3">Mitochondrion membrane</location>
        <topology evidence="6">Single-pass type I membrane protein</topology>
    </subcellularLocation>
    <subcellularLocation>
        <location evidence="4">Melanosome membrane</location>
        <topology evidence="6">Single-pass type I membrane protein</topology>
    </subcellularLocation>
    <text evidence="3 4">The palmitoylated form preferentially localizes to the perinuclear rough ER (By similarity). Localizes to endoplasmic reticulum mitochondria-associated membrane (MAMs) that connect the endoplasmic reticulum and the mitochondria (By similarity).</text>
</comment>
<comment type="PTM">
    <text evidence="8">Phosphorylated at Ser-563 by MAPK3/ERK1. Phosphorylation by MAPK3/ERK1 increases its association with ribosomes.</text>
</comment>
<comment type="PTM">
    <text evidence="1">Palmitoylation by DHHC6 leads to the preferential localization to the perinuclear rough ER. It mediates the association of calnexin with the ribosome-translocon complex (RTC) which is required for efficient folding of glycosylated proteins (By similarity).</text>
</comment>
<comment type="PTM">
    <text evidence="4">Ubiquitinated, leading to proteasomal degradation. Probably ubiquitinated by ZNRF4.</text>
</comment>
<comment type="similarity">
    <text evidence="9">Belongs to the calreticulin family.</text>
</comment>
<accession>P35565</accession>
<feature type="signal peptide" evidence="6">
    <location>
        <begin position="1"/>
        <end position="20"/>
    </location>
</feature>
<feature type="chain" id="PRO_0000004201" description="Calnexin">
    <location>
        <begin position="21"/>
        <end position="591"/>
    </location>
</feature>
<feature type="topological domain" description="Lumenal" evidence="6">
    <location>
        <begin position="21"/>
        <end position="482"/>
    </location>
</feature>
<feature type="transmembrane region" description="Helical" evidence="6">
    <location>
        <begin position="483"/>
        <end position="503"/>
    </location>
</feature>
<feature type="topological domain" description="Cytoplasmic" evidence="6">
    <location>
        <begin position="504"/>
        <end position="591"/>
    </location>
</feature>
<feature type="repeat" description="1-1">
    <location>
        <begin position="279"/>
        <end position="291"/>
    </location>
</feature>
<feature type="repeat" description="1-2">
    <location>
        <begin position="296"/>
        <end position="308"/>
    </location>
</feature>
<feature type="repeat" description="1-3">
    <location>
        <begin position="315"/>
        <end position="327"/>
    </location>
</feature>
<feature type="repeat" description="1-4">
    <location>
        <begin position="334"/>
        <end position="346"/>
    </location>
</feature>
<feature type="repeat" description="2-1">
    <location>
        <begin position="349"/>
        <end position="359"/>
    </location>
</feature>
<feature type="repeat" description="2-2">
    <location>
        <begin position="368"/>
        <end position="378"/>
    </location>
</feature>
<feature type="repeat" description="2-3">
    <location>
        <begin position="382"/>
        <end position="392"/>
    </location>
</feature>
<feature type="repeat" description="2-4">
    <location>
        <begin position="396"/>
        <end position="406"/>
    </location>
</feature>
<feature type="region of interest" description="Disordered" evidence="7">
    <location>
        <begin position="261"/>
        <end position="347"/>
    </location>
</feature>
<feature type="region of interest" description="P domain (Extended arm)" evidence="1">
    <location>
        <begin position="277"/>
        <end position="410"/>
    </location>
</feature>
<feature type="region of interest" description="4 X approximate repeats">
    <location>
        <begin position="279"/>
        <end position="346"/>
    </location>
</feature>
<feature type="region of interest" description="Interaction with PPIB" evidence="1">
    <location>
        <begin position="327"/>
        <end position="360"/>
    </location>
</feature>
<feature type="region of interest" description="4 X approximate repeats">
    <location>
        <begin position="349"/>
        <end position="406"/>
    </location>
</feature>
<feature type="region of interest" description="Sufficient to mediate interaction with SGIP1" evidence="1">
    <location>
        <begin position="504"/>
        <end position="591"/>
    </location>
</feature>
<feature type="region of interest" description="Disordered" evidence="7">
    <location>
        <begin position="514"/>
        <end position="591"/>
    </location>
</feature>
<feature type="compositionally biased region" description="Basic and acidic residues" evidence="7">
    <location>
        <begin position="275"/>
        <end position="320"/>
    </location>
</feature>
<feature type="compositionally biased region" description="Acidic residues" evidence="7">
    <location>
        <begin position="324"/>
        <end position="347"/>
    </location>
</feature>
<feature type="compositionally biased region" description="Basic and acidic residues" evidence="7">
    <location>
        <begin position="514"/>
        <end position="538"/>
    </location>
</feature>
<feature type="compositionally biased region" description="Acidic residues" evidence="7">
    <location>
        <begin position="555"/>
        <end position="568"/>
    </location>
</feature>
<feature type="binding site" evidence="3">
    <location>
        <position position="75"/>
    </location>
    <ligand>
        <name>Ca(2+)</name>
        <dbReference type="ChEBI" id="CHEBI:29108"/>
    </ligand>
</feature>
<feature type="binding site" evidence="3">
    <location>
        <position position="118"/>
    </location>
    <ligand>
        <name>Ca(2+)</name>
        <dbReference type="ChEBI" id="CHEBI:29108"/>
    </ligand>
</feature>
<feature type="binding site" evidence="2">
    <location>
        <position position="165"/>
    </location>
    <ligand>
        <name>an alpha-D-glucoside</name>
        <dbReference type="ChEBI" id="CHEBI:22390"/>
    </ligand>
</feature>
<feature type="binding site" evidence="2">
    <location>
        <position position="167"/>
    </location>
    <ligand>
        <name>an alpha-D-glucoside</name>
        <dbReference type="ChEBI" id="CHEBI:22390"/>
    </ligand>
</feature>
<feature type="binding site" evidence="2">
    <location>
        <position position="186"/>
    </location>
    <ligand>
        <name>an alpha-D-glucoside</name>
        <dbReference type="ChEBI" id="CHEBI:22390"/>
    </ligand>
</feature>
<feature type="binding site" evidence="2">
    <location>
        <position position="193"/>
    </location>
    <ligand>
        <name>an alpha-D-glucoside</name>
        <dbReference type="ChEBI" id="CHEBI:22390"/>
    </ligand>
</feature>
<feature type="binding site" evidence="2">
    <location>
        <position position="426"/>
    </location>
    <ligand>
        <name>an alpha-D-glucoside</name>
        <dbReference type="ChEBI" id="CHEBI:22390"/>
    </ligand>
</feature>
<feature type="binding site" evidence="3">
    <location>
        <position position="437"/>
    </location>
    <ligand>
        <name>Ca(2+)</name>
        <dbReference type="ChEBI" id="CHEBI:29108"/>
    </ligand>
</feature>
<feature type="modified residue" description="N6-acetyllysine" evidence="4">
    <location>
        <position position="138"/>
    </location>
</feature>
<feature type="modified residue" description="Phosphoserine" evidence="10">
    <location>
        <position position="553"/>
    </location>
</feature>
<feature type="modified residue" description="Phosphothreonine" evidence="4">
    <location>
        <position position="561"/>
    </location>
</feature>
<feature type="modified residue" description="Phosphoserine; by MAPK3" evidence="8 10">
    <location>
        <position position="563"/>
    </location>
</feature>
<feature type="modified residue" description="Phosphoserine" evidence="10">
    <location>
        <position position="582"/>
    </location>
</feature>
<feature type="lipid moiety-binding region" description="S-palmitoyl cysteine" evidence="1">
    <location>
        <position position="503"/>
    </location>
</feature>
<feature type="lipid moiety-binding region" description="S-palmitoyl cysteine" evidence="1">
    <location>
        <position position="504"/>
    </location>
</feature>
<feature type="disulfide bond" evidence="3">
    <location>
        <begin position="161"/>
        <end position="195"/>
    </location>
</feature>
<feature type="disulfide bond" evidence="3">
    <location>
        <begin position="361"/>
        <end position="367"/>
    </location>
</feature>
<protein>
    <recommendedName>
        <fullName>Calnexin</fullName>
    </recommendedName>
</protein>
<sequence length="591" mass="67255">MEGKWLLCLLLVLGTAAIQAHDGHDDDMIDIEDDLDDVIEEVEDSKSKSDTSTPPSPKVTYKAPVPTGEVYFADSFDRGSLSGWILSKAKKDDTDDEIAKYDGKWEVDEMKETKLPGDKGLVLMSRAKHHAISAKLNKPFLFDTKPLIVQYEVNFQNGIECGGAYVKLLSKTSELNLDQFHDKTPYTIMFGPDKCGEDYKLHFIFRHKNPKTGVYEEKHAKRPDADLKTYFTDKKTHLYTLILNPDNSFEILVDQSVVNSGNLLNDMTPPVNPSREIEDPEDRKPEDWDERPKIADPDAVKPDDWDEDAPSKIPDEEATKPEGWLDDEPEYIPDPDAEKPEDWDEDMDGEWEAPQIANPKCESAPGCGVWQRPMIDNPNYKGKWKPPMIDNPNYQGIWKPRKIPNPDFFEDLEPFRMTPFSAIGLELWSMTSDIFFDNFIISGDRRVVDDWANDGWGLKKAADGAAEPGVVGQMLEAAEERPWLWVVYILTVALPVFLVILFCCSGKKQSNAMEYKKTDAPQPDVKDEEGKEEEKNKGDEEEEEEKLEEKQKSDAEEDGGTGSQDEEDSKPKAEEDEILNRSPRNRKPRRE</sequence>
<proteinExistence type="evidence at protein level"/>
<gene>
    <name type="primary">Canx</name>
</gene>
<organism>
    <name type="scientific">Rattus norvegicus</name>
    <name type="common">Rat</name>
    <dbReference type="NCBI Taxonomy" id="10116"/>
    <lineage>
        <taxon>Eukaryota</taxon>
        <taxon>Metazoa</taxon>
        <taxon>Chordata</taxon>
        <taxon>Craniata</taxon>
        <taxon>Vertebrata</taxon>
        <taxon>Euteleostomi</taxon>
        <taxon>Mammalia</taxon>
        <taxon>Eutheria</taxon>
        <taxon>Euarchontoglires</taxon>
        <taxon>Glires</taxon>
        <taxon>Rodentia</taxon>
        <taxon>Myomorpha</taxon>
        <taxon>Muroidea</taxon>
        <taxon>Muridae</taxon>
        <taxon>Murinae</taxon>
        <taxon>Rattus</taxon>
    </lineage>
</organism>